<accession>A1RN71</accession>
<feature type="chain" id="PRO_0000302981" description="S-adenosylmethionine synthase">
    <location>
        <begin position="1"/>
        <end position="383"/>
    </location>
</feature>
<feature type="region of interest" description="Flexible loop" evidence="1">
    <location>
        <begin position="99"/>
        <end position="109"/>
    </location>
</feature>
<feature type="binding site" description="in other chain" evidence="1">
    <location>
        <position position="15"/>
    </location>
    <ligand>
        <name>ATP</name>
        <dbReference type="ChEBI" id="CHEBI:30616"/>
        <note>ligand shared between two neighboring subunits</note>
    </ligand>
</feature>
<feature type="binding site" evidence="1">
    <location>
        <position position="17"/>
    </location>
    <ligand>
        <name>Mg(2+)</name>
        <dbReference type="ChEBI" id="CHEBI:18420"/>
    </ligand>
</feature>
<feature type="binding site" evidence="1">
    <location>
        <position position="43"/>
    </location>
    <ligand>
        <name>K(+)</name>
        <dbReference type="ChEBI" id="CHEBI:29103"/>
    </ligand>
</feature>
<feature type="binding site" description="in other chain" evidence="1">
    <location>
        <position position="56"/>
    </location>
    <ligand>
        <name>L-methionine</name>
        <dbReference type="ChEBI" id="CHEBI:57844"/>
        <note>ligand shared between two neighboring subunits</note>
    </ligand>
</feature>
<feature type="binding site" description="in other chain" evidence="1">
    <location>
        <position position="99"/>
    </location>
    <ligand>
        <name>L-methionine</name>
        <dbReference type="ChEBI" id="CHEBI:57844"/>
        <note>ligand shared between two neighboring subunits</note>
    </ligand>
</feature>
<feature type="binding site" description="in other chain" evidence="1">
    <location>
        <begin position="164"/>
        <end position="166"/>
    </location>
    <ligand>
        <name>ATP</name>
        <dbReference type="ChEBI" id="CHEBI:30616"/>
        <note>ligand shared between two neighboring subunits</note>
    </ligand>
</feature>
<feature type="binding site" description="in other chain" evidence="1">
    <location>
        <begin position="230"/>
        <end position="231"/>
    </location>
    <ligand>
        <name>ATP</name>
        <dbReference type="ChEBI" id="CHEBI:30616"/>
        <note>ligand shared between two neighboring subunits</note>
    </ligand>
</feature>
<feature type="binding site" evidence="1">
    <location>
        <position position="239"/>
    </location>
    <ligand>
        <name>ATP</name>
        <dbReference type="ChEBI" id="CHEBI:30616"/>
        <note>ligand shared between two neighboring subunits</note>
    </ligand>
</feature>
<feature type="binding site" evidence="1">
    <location>
        <position position="239"/>
    </location>
    <ligand>
        <name>L-methionine</name>
        <dbReference type="ChEBI" id="CHEBI:57844"/>
        <note>ligand shared between two neighboring subunits</note>
    </ligand>
</feature>
<feature type="binding site" description="in other chain" evidence="1">
    <location>
        <begin position="245"/>
        <end position="246"/>
    </location>
    <ligand>
        <name>ATP</name>
        <dbReference type="ChEBI" id="CHEBI:30616"/>
        <note>ligand shared between two neighboring subunits</note>
    </ligand>
</feature>
<feature type="binding site" evidence="1">
    <location>
        <position position="262"/>
    </location>
    <ligand>
        <name>ATP</name>
        <dbReference type="ChEBI" id="CHEBI:30616"/>
        <note>ligand shared between two neighboring subunits</note>
    </ligand>
</feature>
<feature type="binding site" evidence="1">
    <location>
        <position position="266"/>
    </location>
    <ligand>
        <name>ATP</name>
        <dbReference type="ChEBI" id="CHEBI:30616"/>
        <note>ligand shared between two neighboring subunits</note>
    </ligand>
</feature>
<feature type="binding site" description="in other chain" evidence="1">
    <location>
        <position position="270"/>
    </location>
    <ligand>
        <name>L-methionine</name>
        <dbReference type="ChEBI" id="CHEBI:57844"/>
        <note>ligand shared between two neighboring subunits</note>
    </ligand>
</feature>
<name>METK_SHESW</name>
<proteinExistence type="inferred from homology"/>
<sequence>MAKHLFTSESVSEGHPDKIADQISDAVLDAILAQDPKARVACETYVKTGMVLVGGEVTTSAWVDIEELTRKTVREIGYTHSDMGFDADSCAVLNAIGKQSPDINQGVDRADPKEQGAGDQGLMFGYASNETEILMPAPITYAHALVKRQSEVRKNGTLPWLRPDAKSQVTFAYENNKIVGIDAIVLSTQHSPDIAQADLIEGVMESIIKPVLPAQWLSKDTKYFINPTGRFVIGGPMGDCGLTGRKIIVDTYGGMARHGGGAFSGKDPSKVDRSAAYAARYVAKNIVAAGLADRCELQVSYAIGVAEPTSISIETFGTGKVSEEVLIKLVRQHFDLRPYGLTEMLNLARPIYQATAAYGHFGRNEFPWEATDKAEALRADAGL</sequence>
<keyword id="KW-0067">ATP-binding</keyword>
<keyword id="KW-0963">Cytoplasm</keyword>
<keyword id="KW-0460">Magnesium</keyword>
<keyword id="KW-0479">Metal-binding</keyword>
<keyword id="KW-0547">Nucleotide-binding</keyword>
<keyword id="KW-0554">One-carbon metabolism</keyword>
<keyword id="KW-0630">Potassium</keyword>
<keyword id="KW-0808">Transferase</keyword>
<gene>
    <name evidence="1" type="primary">metK</name>
    <name type="ordered locus">Sputw3181_3302</name>
</gene>
<comment type="function">
    <text evidence="1">Catalyzes the formation of S-adenosylmethionine (AdoMet) from methionine and ATP. The overall synthetic reaction is composed of two sequential steps, AdoMet formation and the subsequent tripolyphosphate hydrolysis which occurs prior to release of AdoMet from the enzyme.</text>
</comment>
<comment type="catalytic activity">
    <reaction evidence="1">
        <text>L-methionine + ATP + H2O = S-adenosyl-L-methionine + phosphate + diphosphate</text>
        <dbReference type="Rhea" id="RHEA:21080"/>
        <dbReference type="ChEBI" id="CHEBI:15377"/>
        <dbReference type="ChEBI" id="CHEBI:30616"/>
        <dbReference type="ChEBI" id="CHEBI:33019"/>
        <dbReference type="ChEBI" id="CHEBI:43474"/>
        <dbReference type="ChEBI" id="CHEBI:57844"/>
        <dbReference type="ChEBI" id="CHEBI:59789"/>
        <dbReference type="EC" id="2.5.1.6"/>
    </reaction>
</comment>
<comment type="cofactor">
    <cofactor evidence="1">
        <name>Mg(2+)</name>
        <dbReference type="ChEBI" id="CHEBI:18420"/>
    </cofactor>
    <text evidence="1">Binds 2 divalent ions per subunit.</text>
</comment>
<comment type="cofactor">
    <cofactor evidence="1">
        <name>K(+)</name>
        <dbReference type="ChEBI" id="CHEBI:29103"/>
    </cofactor>
    <text evidence="1">Binds 1 potassium ion per subunit.</text>
</comment>
<comment type="pathway">
    <text evidence="1">Amino-acid biosynthesis; S-adenosyl-L-methionine biosynthesis; S-adenosyl-L-methionine from L-methionine: step 1/1.</text>
</comment>
<comment type="subunit">
    <text evidence="1">Homotetramer; dimer of dimers.</text>
</comment>
<comment type="subcellular location">
    <subcellularLocation>
        <location evidence="1">Cytoplasm</location>
    </subcellularLocation>
</comment>
<comment type="similarity">
    <text evidence="1">Belongs to the AdoMet synthase family.</text>
</comment>
<reference key="1">
    <citation type="submission" date="2006-12" db="EMBL/GenBank/DDBJ databases">
        <title>Complete sequence of Shewanella sp. W3-18-1.</title>
        <authorList>
            <consortium name="US DOE Joint Genome Institute"/>
            <person name="Copeland A."/>
            <person name="Lucas S."/>
            <person name="Lapidus A."/>
            <person name="Barry K."/>
            <person name="Detter J.C."/>
            <person name="Glavina del Rio T."/>
            <person name="Hammon N."/>
            <person name="Israni S."/>
            <person name="Dalin E."/>
            <person name="Tice H."/>
            <person name="Pitluck S."/>
            <person name="Chain P."/>
            <person name="Malfatti S."/>
            <person name="Shin M."/>
            <person name="Vergez L."/>
            <person name="Schmutz J."/>
            <person name="Larimer F."/>
            <person name="Land M."/>
            <person name="Hauser L."/>
            <person name="Kyrpides N."/>
            <person name="Lykidis A."/>
            <person name="Tiedje J."/>
            <person name="Richardson P."/>
        </authorList>
    </citation>
    <scope>NUCLEOTIDE SEQUENCE [LARGE SCALE GENOMIC DNA]</scope>
    <source>
        <strain>W3-18-1</strain>
    </source>
</reference>
<organism>
    <name type="scientific">Shewanella sp. (strain W3-18-1)</name>
    <dbReference type="NCBI Taxonomy" id="351745"/>
    <lineage>
        <taxon>Bacteria</taxon>
        <taxon>Pseudomonadati</taxon>
        <taxon>Pseudomonadota</taxon>
        <taxon>Gammaproteobacteria</taxon>
        <taxon>Alteromonadales</taxon>
        <taxon>Shewanellaceae</taxon>
        <taxon>Shewanella</taxon>
    </lineage>
</organism>
<dbReference type="EC" id="2.5.1.6" evidence="1"/>
<dbReference type="EMBL" id="CP000503">
    <property type="protein sequence ID" value="ABM26116.1"/>
    <property type="molecule type" value="Genomic_DNA"/>
</dbReference>
<dbReference type="RefSeq" id="WP_011790564.1">
    <property type="nucleotide sequence ID" value="NC_008750.1"/>
</dbReference>
<dbReference type="SMR" id="A1RN71"/>
<dbReference type="KEGG" id="shw:Sputw3181_3302"/>
<dbReference type="HOGENOM" id="CLU_041802_1_1_6"/>
<dbReference type="UniPathway" id="UPA00315">
    <property type="reaction ID" value="UER00080"/>
</dbReference>
<dbReference type="Proteomes" id="UP000002597">
    <property type="component" value="Chromosome"/>
</dbReference>
<dbReference type="GO" id="GO:0005737">
    <property type="term" value="C:cytoplasm"/>
    <property type="evidence" value="ECO:0007669"/>
    <property type="project" value="UniProtKB-SubCell"/>
</dbReference>
<dbReference type="GO" id="GO:0005524">
    <property type="term" value="F:ATP binding"/>
    <property type="evidence" value="ECO:0007669"/>
    <property type="project" value="UniProtKB-UniRule"/>
</dbReference>
<dbReference type="GO" id="GO:0000287">
    <property type="term" value="F:magnesium ion binding"/>
    <property type="evidence" value="ECO:0007669"/>
    <property type="project" value="UniProtKB-UniRule"/>
</dbReference>
<dbReference type="GO" id="GO:0004478">
    <property type="term" value="F:methionine adenosyltransferase activity"/>
    <property type="evidence" value="ECO:0007669"/>
    <property type="project" value="UniProtKB-UniRule"/>
</dbReference>
<dbReference type="GO" id="GO:0006730">
    <property type="term" value="P:one-carbon metabolic process"/>
    <property type="evidence" value="ECO:0007669"/>
    <property type="project" value="UniProtKB-KW"/>
</dbReference>
<dbReference type="GO" id="GO:0006556">
    <property type="term" value="P:S-adenosylmethionine biosynthetic process"/>
    <property type="evidence" value="ECO:0007669"/>
    <property type="project" value="UniProtKB-UniRule"/>
</dbReference>
<dbReference type="CDD" id="cd18079">
    <property type="entry name" value="S-AdoMet_synt"/>
    <property type="match status" value="1"/>
</dbReference>
<dbReference type="FunFam" id="3.30.300.10:FF:000001">
    <property type="entry name" value="S-adenosylmethionine synthase"/>
    <property type="match status" value="1"/>
</dbReference>
<dbReference type="FunFam" id="3.30.300.10:FF:000003">
    <property type="entry name" value="S-adenosylmethionine synthase"/>
    <property type="match status" value="1"/>
</dbReference>
<dbReference type="FunFam" id="3.30.300.10:FF:000004">
    <property type="entry name" value="S-adenosylmethionine synthase"/>
    <property type="match status" value="1"/>
</dbReference>
<dbReference type="Gene3D" id="3.30.300.10">
    <property type="match status" value="3"/>
</dbReference>
<dbReference type="HAMAP" id="MF_00086">
    <property type="entry name" value="S_AdoMet_synth1"/>
    <property type="match status" value="1"/>
</dbReference>
<dbReference type="InterPro" id="IPR022631">
    <property type="entry name" value="ADOMET_SYNTHASE_CS"/>
</dbReference>
<dbReference type="InterPro" id="IPR022630">
    <property type="entry name" value="S-AdoMet_synt_C"/>
</dbReference>
<dbReference type="InterPro" id="IPR022629">
    <property type="entry name" value="S-AdoMet_synt_central"/>
</dbReference>
<dbReference type="InterPro" id="IPR022628">
    <property type="entry name" value="S-AdoMet_synt_N"/>
</dbReference>
<dbReference type="InterPro" id="IPR002133">
    <property type="entry name" value="S-AdoMet_synthetase"/>
</dbReference>
<dbReference type="InterPro" id="IPR022636">
    <property type="entry name" value="S-AdoMet_synthetase_sfam"/>
</dbReference>
<dbReference type="NCBIfam" id="TIGR01034">
    <property type="entry name" value="metK"/>
    <property type="match status" value="1"/>
</dbReference>
<dbReference type="PANTHER" id="PTHR11964">
    <property type="entry name" value="S-ADENOSYLMETHIONINE SYNTHETASE"/>
    <property type="match status" value="1"/>
</dbReference>
<dbReference type="Pfam" id="PF02773">
    <property type="entry name" value="S-AdoMet_synt_C"/>
    <property type="match status" value="1"/>
</dbReference>
<dbReference type="Pfam" id="PF02772">
    <property type="entry name" value="S-AdoMet_synt_M"/>
    <property type="match status" value="1"/>
</dbReference>
<dbReference type="Pfam" id="PF00438">
    <property type="entry name" value="S-AdoMet_synt_N"/>
    <property type="match status" value="1"/>
</dbReference>
<dbReference type="PIRSF" id="PIRSF000497">
    <property type="entry name" value="MAT"/>
    <property type="match status" value="1"/>
</dbReference>
<dbReference type="SUPFAM" id="SSF55973">
    <property type="entry name" value="S-adenosylmethionine synthetase"/>
    <property type="match status" value="3"/>
</dbReference>
<dbReference type="PROSITE" id="PS00376">
    <property type="entry name" value="ADOMET_SYNTHASE_1"/>
    <property type="match status" value="1"/>
</dbReference>
<dbReference type="PROSITE" id="PS00377">
    <property type="entry name" value="ADOMET_SYNTHASE_2"/>
    <property type="match status" value="1"/>
</dbReference>
<protein>
    <recommendedName>
        <fullName evidence="1">S-adenosylmethionine synthase</fullName>
        <shortName evidence="1">AdoMet synthase</shortName>
        <ecNumber evidence="1">2.5.1.6</ecNumber>
    </recommendedName>
    <alternativeName>
        <fullName evidence="1">MAT</fullName>
    </alternativeName>
    <alternativeName>
        <fullName evidence="1">Methionine adenosyltransferase</fullName>
    </alternativeName>
</protein>
<evidence type="ECO:0000255" key="1">
    <source>
        <dbReference type="HAMAP-Rule" id="MF_00086"/>
    </source>
</evidence>